<keyword id="KW-0378">Hydrolase</keyword>
<accession>Q4L3P5</accession>
<protein>
    <recommendedName>
        <fullName evidence="1">GTP cyclohydrolase FolE2</fullName>
        <ecNumber evidence="1">3.5.4.16</ecNumber>
    </recommendedName>
</protein>
<dbReference type="EC" id="3.5.4.16" evidence="1"/>
<dbReference type="EMBL" id="AP006716">
    <property type="protein sequence ID" value="BAE05732.1"/>
    <property type="molecule type" value="Genomic_DNA"/>
</dbReference>
<dbReference type="RefSeq" id="WP_011276678.1">
    <property type="nucleotide sequence ID" value="NC_007168.1"/>
</dbReference>
<dbReference type="SMR" id="Q4L3P5"/>
<dbReference type="GeneID" id="93781645"/>
<dbReference type="KEGG" id="sha:SH2423"/>
<dbReference type="eggNOG" id="COG1469">
    <property type="taxonomic scope" value="Bacteria"/>
</dbReference>
<dbReference type="HOGENOM" id="CLU_062816_1_1_9"/>
<dbReference type="OrthoDB" id="9774824at2"/>
<dbReference type="UniPathway" id="UPA00848">
    <property type="reaction ID" value="UER00151"/>
</dbReference>
<dbReference type="Proteomes" id="UP000000543">
    <property type="component" value="Chromosome"/>
</dbReference>
<dbReference type="GO" id="GO:0003934">
    <property type="term" value="F:GTP cyclohydrolase I activity"/>
    <property type="evidence" value="ECO:0007669"/>
    <property type="project" value="UniProtKB-UniRule"/>
</dbReference>
<dbReference type="GO" id="GO:0046654">
    <property type="term" value="P:tetrahydrofolate biosynthetic process"/>
    <property type="evidence" value="ECO:0007669"/>
    <property type="project" value="UniProtKB-UniRule"/>
</dbReference>
<dbReference type="Gene3D" id="3.10.270.10">
    <property type="entry name" value="Urate Oxidase"/>
    <property type="match status" value="1"/>
</dbReference>
<dbReference type="HAMAP" id="MF_01527_B">
    <property type="entry name" value="GTP_cyclohydrol_B"/>
    <property type="match status" value="1"/>
</dbReference>
<dbReference type="InterPro" id="IPR022838">
    <property type="entry name" value="GTP_cyclohydrolase_FolE2"/>
</dbReference>
<dbReference type="InterPro" id="IPR003801">
    <property type="entry name" value="GTP_cyclohydrolase_FolE2/MptA"/>
</dbReference>
<dbReference type="NCBIfam" id="NF010200">
    <property type="entry name" value="PRK13674.1-1"/>
    <property type="match status" value="1"/>
</dbReference>
<dbReference type="PANTHER" id="PTHR36445">
    <property type="entry name" value="GTP CYCLOHYDROLASE MPTA"/>
    <property type="match status" value="1"/>
</dbReference>
<dbReference type="PANTHER" id="PTHR36445:SF1">
    <property type="entry name" value="GTP CYCLOHYDROLASE MPTA"/>
    <property type="match status" value="1"/>
</dbReference>
<dbReference type="Pfam" id="PF02649">
    <property type="entry name" value="GCHY-1"/>
    <property type="match status" value="1"/>
</dbReference>
<organism>
    <name type="scientific">Staphylococcus haemolyticus (strain JCSC1435)</name>
    <dbReference type="NCBI Taxonomy" id="279808"/>
    <lineage>
        <taxon>Bacteria</taxon>
        <taxon>Bacillati</taxon>
        <taxon>Bacillota</taxon>
        <taxon>Bacilli</taxon>
        <taxon>Bacillales</taxon>
        <taxon>Staphylococcaceae</taxon>
        <taxon>Staphylococcus</taxon>
    </lineage>
</organism>
<reference key="1">
    <citation type="journal article" date="2005" name="J. Bacteriol.">
        <title>Whole-genome sequencing of Staphylococcus haemolyticus uncovers the extreme plasticity of its genome and the evolution of human-colonizing staphylococcal species.</title>
        <authorList>
            <person name="Takeuchi F."/>
            <person name="Watanabe S."/>
            <person name="Baba T."/>
            <person name="Yuzawa H."/>
            <person name="Ito T."/>
            <person name="Morimoto Y."/>
            <person name="Kuroda M."/>
            <person name="Cui L."/>
            <person name="Takahashi M."/>
            <person name="Ankai A."/>
            <person name="Baba S."/>
            <person name="Fukui S."/>
            <person name="Lee J.C."/>
            <person name="Hiramatsu K."/>
        </authorList>
    </citation>
    <scope>NUCLEOTIDE SEQUENCE [LARGE SCALE GENOMIC DNA]</scope>
    <source>
        <strain>JCSC1435</strain>
    </source>
</reference>
<gene>
    <name evidence="1" type="primary">folE2</name>
    <name type="ordered locus">SH2423</name>
</gene>
<evidence type="ECO:0000255" key="1">
    <source>
        <dbReference type="HAMAP-Rule" id="MF_01527"/>
    </source>
</evidence>
<name>GCH4_STAHJ</name>
<proteinExistence type="inferred from homology"/>
<comment type="function">
    <text evidence="1">Converts GTP to 7,8-dihydroneopterin triphosphate.</text>
</comment>
<comment type="catalytic activity">
    <reaction evidence="1">
        <text>GTP + H2O = 7,8-dihydroneopterin 3'-triphosphate + formate + H(+)</text>
        <dbReference type="Rhea" id="RHEA:17473"/>
        <dbReference type="ChEBI" id="CHEBI:15377"/>
        <dbReference type="ChEBI" id="CHEBI:15378"/>
        <dbReference type="ChEBI" id="CHEBI:15740"/>
        <dbReference type="ChEBI" id="CHEBI:37565"/>
        <dbReference type="ChEBI" id="CHEBI:58462"/>
        <dbReference type="EC" id="3.5.4.16"/>
    </reaction>
</comment>
<comment type="pathway">
    <text evidence="1">Cofactor biosynthesis; 7,8-dihydroneopterin triphosphate biosynthesis; 7,8-dihydroneopterin triphosphate from GTP: step 1/1.</text>
</comment>
<comment type="similarity">
    <text evidence="1">Belongs to the GTP cyclohydrolase IV family.</text>
</comment>
<sequence length="292" mass="33672">MTEFDLSTREGRWKHFGSVDPIEGTKPTTKNEMTDLQSTHKNFLFEIEEVGIKNLIYPVNIDRFQTAGRFSFSTSLNKDEKGINMSRILESVEKHYNNGLELNFDTLYQVLRTLQTNMKQNSSGVDVSGKWFFDRFSPVTNIKAVGNADVTYGLAIEQDQITRKEITIEATVTTLCPCSKEISEYSAHNQRGVVTVKVYLDKNNQVVDDYKDKILDAMEANASSILYPILKRPDEKRVTERAYENPRFVEDLIRLIAADLVEFDWIDGFDIECRNEESIHQHDAFAKLKYRK</sequence>
<feature type="chain" id="PRO_0000289525" description="GTP cyclohydrolase FolE2">
    <location>
        <begin position="1"/>
        <end position="292"/>
    </location>
</feature>
<feature type="site" description="May be catalytically important" evidence="1">
    <location>
        <position position="176"/>
    </location>
</feature>